<reference key="1">
    <citation type="submission" date="2008-02" db="EMBL/GenBank/DDBJ databases">
        <title>Complete sequence of Yersinia pseudotuberculosis YPIII.</title>
        <authorList>
            <consortium name="US DOE Joint Genome Institute"/>
            <person name="Copeland A."/>
            <person name="Lucas S."/>
            <person name="Lapidus A."/>
            <person name="Glavina del Rio T."/>
            <person name="Dalin E."/>
            <person name="Tice H."/>
            <person name="Bruce D."/>
            <person name="Goodwin L."/>
            <person name="Pitluck S."/>
            <person name="Munk A.C."/>
            <person name="Brettin T."/>
            <person name="Detter J.C."/>
            <person name="Han C."/>
            <person name="Tapia R."/>
            <person name="Schmutz J."/>
            <person name="Larimer F."/>
            <person name="Land M."/>
            <person name="Hauser L."/>
            <person name="Challacombe J.F."/>
            <person name="Green L."/>
            <person name="Lindler L.E."/>
            <person name="Nikolich M.P."/>
            <person name="Richardson P."/>
        </authorList>
    </citation>
    <scope>NUCLEOTIDE SEQUENCE [LARGE SCALE GENOMIC DNA]</scope>
    <source>
        <strain>YPIII</strain>
    </source>
</reference>
<proteinExistence type="inferred from homology"/>
<comment type="function">
    <text evidence="1">Represses a number of genes involved in the response to DNA damage (SOS response), including recA and lexA. Binds to the 16 bp palindromic sequence 5'-CTGTATATATATACAG-3'. In the presence of single-stranded DNA, RecA interacts with LexA causing an autocatalytic cleavage which disrupts the DNA-binding part of LexA, leading to derepression of the SOS regulon and eventually DNA repair.</text>
</comment>
<comment type="catalytic activity">
    <reaction evidence="1">
        <text>Hydrolysis of Ala-|-Gly bond in repressor LexA.</text>
        <dbReference type="EC" id="3.4.21.88"/>
    </reaction>
</comment>
<comment type="subunit">
    <text evidence="1">Homodimer.</text>
</comment>
<comment type="similarity">
    <text evidence="1">Belongs to the peptidase S24 family.</text>
</comment>
<evidence type="ECO:0000255" key="1">
    <source>
        <dbReference type="HAMAP-Rule" id="MF_00015"/>
    </source>
</evidence>
<keyword id="KW-0068">Autocatalytic cleavage</keyword>
<keyword id="KW-0227">DNA damage</keyword>
<keyword id="KW-0234">DNA repair</keyword>
<keyword id="KW-0235">DNA replication</keyword>
<keyword id="KW-0238">DNA-binding</keyword>
<keyword id="KW-0378">Hydrolase</keyword>
<keyword id="KW-0678">Repressor</keyword>
<keyword id="KW-0742">SOS response</keyword>
<keyword id="KW-0804">Transcription</keyword>
<keyword id="KW-0805">Transcription regulation</keyword>
<feature type="chain" id="PRO_1000089608" description="LexA repressor">
    <location>
        <begin position="1"/>
        <end position="202"/>
    </location>
</feature>
<feature type="DNA-binding region" description="H-T-H motif" evidence="1">
    <location>
        <begin position="28"/>
        <end position="48"/>
    </location>
</feature>
<feature type="active site" description="For autocatalytic cleavage activity" evidence="1">
    <location>
        <position position="119"/>
    </location>
</feature>
<feature type="active site" description="For autocatalytic cleavage activity" evidence="1">
    <location>
        <position position="156"/>
    </location>
</feature>
<feature type="site" description="Cleavage; by autolysis" evidence="1">
    <location>
        <begin position="84"/>
        <end position="85"/>
    </location>
</feature>
<gene>
    <name evidence="1" type="primary">lexA</name>
    <name type="ordered locus">YPK_3860</name>
</gene>
<organism>
    <name type="scientific">Yersinia pseudotuberculosis serotype O:3 (strain YPIII)</name>
    <dbReference type="NCBI Taxonomy" id="502800"/>
    <lineage>
        <taxon>Bacteria</taxon>
        <taxon>Pseudomonadati</taxon>
        <taxon>Pseudomonadota</taxon>
        <taxon>Gammaproteobacteria</taxon>
        <taxon>Enterobacterales</taxon>
        <taxon>Yersiniaceae</taxon>
        <taxon>Yersinia</taxon>
    </lineage>
</organism>
<accession>B1JNE3</accession>
<sequence>MKALTTRQQEVYDLVRDHLAQTGMPPTRAEIAQRLGFRSPNAAEEHLKALARKGVIEIVSGASRGIRLLMEEEEGLPLIGRVAAGEPLLAQQHIEGHYKVDPSLFKPGADFLLRVNGMSMRDIGILDGDLLAVHKTQDVRNGQVVVARIDDEVTVKRLKKQGNIVHLLPENSEFQPIVVDLREQSFTIEGLAVGVIRNGDWI</sequence>
<protein>
    <recommendedName>
        <fullName evidence="1">LexA repressor</fullName>
        <ecNumber evidence="1">3.4.21.88</ecNumber>
    </recommendedName>
</protein>
<dbReference type="EC" id="3.4.21.88" evidence="1"/>
<dbReference type="EMBL" id="CP000950">
    <property type="protein sequence ID" value="ACA70125.1"/>
    <property type="molecule type" value="Genomic_DNA"/>
</dbReference>
<dbReference type="RefSeq" id="WP_002209090.1">
    <property type="nucleotide sequence ID" value="NZ_CP009792.1"/>
</dbReference>
<dbReference type="SMR" id="B1JNE3"/>
<dbReference type="MEROPS" id="S24.001"/>
<dbReference type="GeneID" id="57974290"/>
<dbReference type="KEGG" id="ypy:YPK_3860"/>
<dbReference type="PATRIC" id="fig|502800.11.peg.207"/>
<dbReference type="GO" id="GO:0003677">
    <property type="term" value="F:DNA binding"/>
    <property type="evidence" value="ECO:0007669"/>
    <property type="project" value="UniProtKB-UniRule"/>
</dbReference>
<dbReference type="GO" id="GO:0004252">
    <property type="term" value="F:serine-type endopeptidase activity"/>
    <property type="evidence" value="ECO:0007669"/>
    <property type="project" value="UniProtKB-UniRule"/>
</dbReference>
<dbReference type="GO" id="GO:0006281">
    <property type="term" value="P:DNA repair"/>
    <property type="evidence" value="ECO:0007669"/>
    <property type="project" value="UniProtKB-UniRule"/>
</dbReference>
<dbReference type="GO" id="GO:0006260">
    <property type="term" value="P:DNA replication"/>
    <property type="evidence" value="ECO:0007669"/>
    <property type="project" value="UniProtKB-UniRule"/>
</dbReference>
<dbReference type="GO" id="GO:0045892">
    <property type="term" value="P:negative regulation of DNA-templated transcription"/>
    <property type="evidence" value="ECO:0007669"/>
    <property type="project" value="UniProtKB-UniRule"/>
</dbReference>
<dbReference type="GO" id="GO:0006508">
    <property type="term" value="P:proteolysis"/>
    <property type="evidence" value="ECO:0007669"/>
    <property type="project" value="InterPro"/>
</dbReference>
<dbReference type="GO" id="GO:0009432">
    <property type="term" value="P:SOS response"/>
    <property type="evidence" value="ECO:0007669"/>
    <property type="project" value="UniProtKB-UniRule"/>
</dbReference>
<dbReference type="CDD" id="cd06529">
    <property type="entry name" value="S24_LexA-like"/>
    <property type="match status" value="1"/>
</dbReference>
<dbReference type="FunFam" id="1.10.10.10:FF:000009">
    <property type="entry name" value="LexA repressor"/>
    <property type="match status" value="1"/>
</dbReference>
<dbReference type="FunFam" id="2.10.109.10:FF:000001">
    <property type="entry name" value="LexA repressor"/>
    <property type="match status" value="1"/>
</dbReference>
<dbReference type="Gene3D" id="2.10.109.10">
    <property type="entry name" value="Umud Fragment, subunit A"/>
    <property type="match status" value="1"/>
</dbReference>
<dbReference type="Gene3D" id="1.10.10.10">
    <property type="entry name" value="Winged helix-like DNA-binding domain superfamily/Winged helix DNA-binding domain"/>
    <property type="match status" value="1"/>
</dbReference>
<dbReference type="HAMAP" id="MF_00015">
    <property type="entry name" value="LexA"/>
    <property type="match status" value="1"/>
</dbReference>
<dbReference type="InterPro" id="IPR006200">
    <property type="entry name" value="LexA"/>
</dbReference>
<dbReference type="InterPro" id="IPR039418">
    <property type="entry name" value="LexA-like"/>
</dbReference>
<dbReference type="InterPro" id="IPR036286">
    <property type="entry name" value="LexA/Signal_pep-like_sf"/>
</dbReference>
<dbReference type="InterPro" id="IPR006199">
    <property type="entry name" value="LexA_DNA-bd_dom"/>
</dbReference>
<dbReference type="InterPro" id="IPR050077">
    <property type="entry name" value="LexA_repressor"/>
</dbReference>
<dbReference type="InterPro" id="IPR006197">
    <property type="entry name" value="Peptidase_S24_LexA"/>
</dbReference>
<dbReference type="InterPro" id="IPR015927">
    <property type="entry name" value="Peptidase_S24_S26A/B/C"/>
</dbReference>
<dbReference type="InterPro" id="IPR036388">
    <property type="entry name" value="WH-like_DNA-bd_sf"/>
</dbReference>
<dbReference type="InterPro" id="IPR036390">
    <property type="entry name" value="WH_DNA-bd_sf"/>
</dbReference>
<dbReference type="NCBIfam" id="TIGR00498">
    <property type="entry name" value="lexA"/>
    <property type="match status" value="1"/>
</dbReference>
<dbReference type="PANTHER" id="PTHR33516">
    <property type="entry name" value="LEXA REPRESSOR"/>
    <property type="match status" value="1"/>
</dbReference>
<dbReference type="PANTHER" id="PTHR33516:SF2">
    <property type="entry name" value="LEXA REPRESSOR-RELATED"/>
    <property type="match status" value="1"/>
</dbReference>
<dbReference type="Pfam" id="PF01726">
    <property type="entry name" value="LexA_DNA_bind"/>
    <property type="match status" value="1"/>
</dbReference>
<dbReference type="Pfam" id="PF00717">
    <property type="entry name" value="Peptidase_S24"/>
    <property type="match status" value="1"/>
</dbReference>
<dbReference type="PRINTS" id="PR00726">
    <property type="entry name" value="LEXASERPTASE"/>
</dbReference>
<dbReference type="SUPFAM" id="SSF51306">
    <property type="entry name" value="LexA/Signal peptidase"/>
    <property type="match status" value="1"/>
</dbReference>
<dbReference type="SUPFAM" id="SSF46785">
    <property type="entry name" value="Winged helix' DNA-binding domain"/>
    <property type="match status" value="1"/>
</dbReference>
<name>LEXA_YERPY</name>